<feature type="chain" id="PRO_0000166206" description="Glycine cleavage system H protein">
    <location>
        <begin position="1"/>
        <end position="126"/>
    </location>
</feature>
<feature type="domain" description="Lipoyl-binding" evidence="2">
    <location>
        <begin position="22"/>
        <end position="104"/>
    </location>
</feature>
<feature type="modified residue" description="N6-lipoyllysine" evidence="1">
    <location>
        <position position="63"/>
    </location>
</feature>
<keyword id="KW-0450">Lipoyl</keyword>
<keyword id="KW-1185">Reference proteome</keyword>
<organism>
    <name type="scientific">Bacteroides thetaiotaomicron (strain ATCC 29148 / DSM 2079 / JCM 5827 / CCUG 10774 / NCTC 10582 / VPI-5482 / E50)</name>
    <dbReference type="NCBI Taxonomy" id="226186"/>
    <lineage>
        <taxon>Bacteria</taxon>
        <taxon>Pseudomonadati</taxon>
        <taxon>Bacteroidota</taxon>
        <taxon>Bacteroidia</taxon>
        <taxon>Bacteroidales</taxon>
        <taxon>Bacteroidaceae</taxon>
        <taxon>Bacteroides</taxon>
    </lineage>
</organism>
<evidence type="ECO:0000255" key="1">
    <source>
        <dbReference type="HAMAP-Rule" id="MF_00272"/>
    </source>
</evidence>
<evidence type="ECO:0000255" key="2">
    <source>
        <dbReference type="PROSITE-ProRule" id="PRU01066"/>
    </source>
</evidence>
<reference key="1">
    <citation type="journal article" date="2003" name="Science">
        <title>A genomic view of the human-Bacteroides thetaiotaomicron symbiosis.</title>
        <authorList>
            <person name="Xu J."/>
            <person name="Bjursell M.K."/>
            <person name="Himrod J."/>
            <person name="Deng S."/>
            <person name="Carmichael L.K."/>
            <person name="Chiang H.C."/>
            <person name="Hooper L.V."/>
            <person name="Gordon J.I."/>
        </authorList>
    </citation>
    <scope>NUCLEOTIDE SEQUENCE [LARGE SCALE GENOMIC DNA]</scope>
    <source>
        <strain>ATCC 29148 / DSM 2079 / JCM 5827 / CCUG 10774 / NCTC 10582 / VPI-5482 / E50</strain>
    </source>
</reference>
<protein>
    <recommendedName>
        <fullName evidence="1">Glycine cleavage system H protein</fullName>
    </recommendedName>
</protein>
<accession>Q8A4S8</accession>
<proteinExistence type="inferred from homology"/>
<sequence length="126" mass="13918">MNFPQNLKYTNEHEWIRVEGDIAYVGITDYAQEQLGDIVFVDIPTVGETLEAGETFGTIEVVKTISDLFLPLAGEILEQNEALEENPELVNKDPYGEGWLIKMKPADASAAEDLLDAEAYKAVVNG</sequence>
<comment type="function">
    <text evidence="1">The glycine cleavage system catalyzes the degradation of glycine. The H protein shuttles the methylamine group of glycine from the P protein to the T protein.</text>
</comment>
<comment type="cofactor">
    <cofactor evidence="1">
        <name>(R)-lipoate</name>
        <dbReference type="ChEBI" id="CHEBI:83088"/>
    </cofactor>
    <text evidence="1">Binds 1 lipoyl cofactor covalently.</text>
</comment>
<comment type="subunit">
    <text evidence="1">The glycine cleavage system is composed of four proteins: P, T, L and H.</text>
</comment>
<comment type="similarity">
    <text evidence="1">Belongs to the GcvH family.</text>
</comment>
<gene>
    <name evidence="1" type="primary">gcvH</name>
    <name type="ordered locus">BT_2519</name>
</gene>
<name>GCSH_BACTN</name>
<dbReference type="EMBL" id="AE015928">
    <property type="protein sequence ID" value="AAO77626.1"/>
    <property type="molecule type" value="Genomic_DNA"/>
</dbReference>
<dbReference type="RefSeq" id="NP_811432.1">
    <property type="nucleotide sequence ID" value="NC_004663.1"/>
</dbReference>
<dbReference type="RefSeq" id="WP_008765165.1">
    <property type="nucleotide sequence ID" value="NZ_UYXG01000027.1"/>
</dbReference>
<dbReference type="SMR" id="Q8A4S8"/>
<dbReference type="FunCoup" id="Q8A4S8">
    <property type="interactions" value="518"/>
</dbReference>
<dbReference type="STRING" id="226186.BT_2519"/>
<dbReference type="PaxDb" id="226186-BT_2519"/>
<dbReference type="EnsemblBacteria" id="AAO77626">
    <property type="protein sequence ID" value="AAO77626"/>
    <property type="gene ID" value="BT_2519"/>
</dbReference>
<dbReference type="GeneID" id="60923691"/>
<dbReference type="KEGG" id="bth:BT_2519"/>
<dbReference type="PATRIC" id="fig|226186.12.peg.2571"/>
<dbReference type="eggNOG" id="COG0509">
    <property type="taxonomic scope" value="Bacteria"/>
</dbReference>
<dbReference type="HOGENOM" id="CLU_097408_2_2_10"/>
<dbReference type="InParanoid" id="Q8A4S8"/>
<dbReference type="OrthoDB" id="9796712at2"/>
<dbReference type="Proteomes" id="UP000001414">
    <property type="component" value="Chromosome"/>
</dbReference>
<dbReference type="GO" id="GO:0005829">
    <property type="term" value="C:cytosol"/>
    <property type="evidence" value="ECO:0000318"/>
    <property type="project" value="GO_Central"/>
</dbReference>
<dbReference type="GO" id="GO:0005960">
    <property type="term" value="C:glycine cleavage complex"/>
    <property type="evidence" value="ECO:0007669"/>
    <property type="project" value="InterPro"/>
</dbReference>
<dbReference type="GO" id="GO:0019464">
    <property type="term" value="P:glycine decarboxylation via glycine cleavage system"/>
    <property type="evidence" value="ECO:0007669"/>
    <property type="project" value="UniProtKB-UniRule"/>
</dbReference>
<dbReference type="CDD" id="cd06848">
    <property type="entry name" value="GCS_H"/>
    <property type="match status" value="1"/>
</dbReference>
<dbReference type="Gene3D" id="2.40.50.100">
    <property type="match status" value="1"/>
</dbReference>
<dbReference type="HAMAP" id="MF_00272">
    <property type="entry name" value="GcvH"/>
    <property type="match status" value="1"/>
</dbReference>
<dbReference type="InterPro" id="IPR003016">
    <property type="entry name" value="2-oxoA_DH_lipoyl-BS"/>
</dbReference>
<dbReference type="InterPro" id="IPR000089">
    <property type="entry name" value="Biotin_lipoyl"/>
</dbReference>
<dbReference type="InterPro" id="IPR002930">
    <property type="entry name" value="GCV_H"/>
</dbReference>
<dbReference type="InterPro" id="IPR033753">
    <property type="entry name" value="GCV_H/Fam206"/>
</dbReference>
<dbReference type="InterPro" id="IPR017453">
    <property type="entry name" value="GCV_H_sub"/>
</dbReference>
<dbReference type="InterPro" id="IPR011053">
    <property type="entry name" value="Single_hybrid_motif"/>
</dbReference>
<dbReference type="NCBIfam" id="TIGR00527">
    <property type="entry name" value="gcvH"/>
    <property type="match status" value="1"/>
</dbReference>
<dbReference type="NCBIfam" id="NF002270">
    <property type="entry name" value="PRK01202.1"/>
    <property type="match status" value="1"/>
</dbReference>
<dbReference type="PANTHER" id="PTHR11715">
    <property type="entry name" value="GLYCINE CLEAVAGE SYSTEM H PROTEIN"/>
    <property type="match status" value="1"/>
</dbReference>
<dbReference type="PANTHER" id="PTHR11715:SF3">
    <property type="entry name" value="GLYCINE CLEAVAGE SYSTEM H PROTEIN-RELATED"/>
    <property type="match status" value="1"/>
</dbReference>
<dbReference type="Pfam" id="PF01597">
    <property type="entry name" value="GCV_H"/>
    <property type="match status" value="1"/>
</dbReference>
<dbReference type="SUPFAM" id="SSF51230">
    <property type="entry name" value="Single hybrid motif"/>
    <property type="match status" value="1"/>
</dbReference>
<dbReference type="PROSITE" id="PS50968">
    <property type="entry name" value="BIOTINYL_LIPOYL"/>
    <property type="match status" value="1"/>
</dbReference>
<dbReference type="PROSITE" id="PS00189">
    <property type="entry name" value="LIPOYL"/>
    <property type="match status" value="1"/>
</dbReference>